<gene>
    <name evidence="2" type="primary">atpE</name>
    <name type="ordered locus">SMU_1534</name>
</gene>
<accession>P95783</accession>
<name>ATPL_STRMU</name>
<dbReference type="EMBL" id="U31170">
    <property type="protein sequence ID" value="AAD13377.1"/>
    <property type="molecule type" value="Genomic_DNA"/>
</dbReference>
<dbReference type="EMBL" id="AE014133">
    <property type="protein sequence ID" value="AAN59184.1"/>
    <property type="molecule type" value="Genomic_DNA"/>
</dbReference>
<dbReference type="PIR" id="JC5735">
    <property type="entry name" value="JC5735"/>
</dbReference>
<dbReference type="RefSeq" id="NP_721878.1">
    <property type="nucleotide sequence ID" value="NC_004350.2"/>
</dbReference>
<dbReference type="RefSeq" id="WP_002262946.1">
    <property type="nucleotide sequence ID" value="NC_004350.2"/>
</dbReference>
<dbReference type="SMR" id="P95783"/>
<dbReference type="STRING" id="210007.SMU_1534"/>
<dbReference type="KEGG" id="smu:SMU_1534"/>
<dbReference type="PATRIC" id="fig|210007.7.peg.1366"/>
<dbReference type="HOGENOM" id="CLU_148047_5_2_9"/>
<dbReference type="OrthoDB" id="2357540at2"/>
<dbReference type="PhylomeDB" id="P95783"/>
<dbReference type="SABIO-RK" id="P95783"/>
<dbReference type="Proteomes" id="UP000002512">
    <property type="component" value="Chromosome"/>
</dbReference>
<dbReference type="GO" id="GO:0005886">
    <property type="term" value="C:plasma membrane"/>
    <property type="evidence" value="ECO:0007669"/>
    <property type="project" value="UniProtKB-SubCell"/>
</dbReference>
<dbReference type="GO" id="GO:0045259">
    <property type="term" value="C:proton-transporting ATP synthase complex"/>
    <property type="evidence" value="ECO:0007669"/>
    <property type="project" value="UniProtKB-KW"/>
</dbReference>
<dbReference type="GO" id="GO:0033177">
    <property type="term" value="C:proton-transporting two-sector ATPase complex, proton-transporting domain"/>
    <property type="evidence" value="ECO:0007669"/>
    <property type="project" value="InterPro"/>
</dbReference>
<dbReference type="GO" id="GO:0008289">
    <property type="term" value="F:lipid binding"/>
    <property type="evidence" value="ECO:0007669"/>
    <property type="project" value="UniProtKB-KW"/>
</dbReference>
<dbReference type="GO" id="GO:0046933">
    <property type="term" value="F:proton-transporting ATP synthase activity, rotational mechanism"/>
    <property type="evidence" value="ECO:0007669"/>
    <property type="project" value="UniProtKB-UniRule"/>
</dbReference>
<dbReference type="CDD" id="cd18121">
    <property type="entry name" value="ATP-synt_Fo_c"/>
    <property type="match status" value="1"/>
</dbReference>
<dbReference type="Gene3D" id="1.20.20.10">
    <property type="entry name" value="F1F0 ATP synthase subunit C"/>
    <property type="match status" value="1"/>
</dbReference>
<dbReference type="HAMAP" id="MF_01396">
    <property type="entry name" value="ATP_synth_c_bact"/>
    <property type="match status" value="1"/>
</dbReference>
<dbReference type="InterPro" id="IPR000454">
    <property type="entry name" value="ATP_synth_F0_csu"/>
</dbReference>
<dbReference type="InterPro" id="IPR020537">
    <property type="entry name" value="ATP_synth_F0_csu_DDCD_BS"/>
</dbReference>
<dbReference type="InterPro" id="IPR038662">
    <property type="entry name" value="ATP_synth_F0_csu_sf"/>
</dbReference>
<dbReference type="InterPro" id="IPR002379">
    <property type="entry name" value="ATPase_proteolipid_c-like_dom"/>
</dbReference>
<dbReference type="InterPro" id="IPR035921">
    <property type="entry name" value="F/V-ATP_Csub_sf"/>
</dbReference>
<dbReference type="NCBIfam" id="NF009997">
    <property type="entry name" value="PRK13467.1"/>
    <property type="match status" value="1"/>
</dbReference>
<dbReference type="Pfam" id="PF00137">
    <property type="entry name" value="ATP-synt_C"/>
    <property type="match status" value="1"/>
</dbReference>
<dbReference type="PRINTS" id="PR00124">
    <property type="entry name" value="ATPASEC"/>
</dbReference>
<dbReference type="SUPFAM" id="SSF81333">
    <property type="entry name" value="F1F0 ATP synthase subunit C"/>
    <property type="match status" value="1"/>
</dbReference>
<dbReference type="PROSITE" id="PS00605">
    <property type="entry name" value="ATPASE_C"/>
    <property type="match status" value="1"/>
</dbReference>
<evidence type="ECO:0000250" key="1"/>
<evidence type="ECO:0000255" key="2">
    <source>
        <dbReference type="HAMAP-Rule" id="MF_01396"/>
    </source>
</evidence>
<sequence length="67" mass="7060">MLNLKILALGIAVLGVSLGEGILVANIAKSAARQPEMYGKLQTLMIMGVAFIEGTFFVLLASTFFVG</sequence>
<feature type="chain" id="PRO_0000112167" description="ATP synthase subunit c">
    <location>
        <begin position="1"/>
        <end position="67"/>
    </location>
</feature>
<feature type="transmembrane region" description="Helical" evidence="2">
    <location>
        <begin position="6"/>
        <end position="26"/>
    </location>
</feature>
<feature type="transmembrane region" description="Helical" evidence="2">
    <location>
        <begin position="46"/>
        <end position="66"/>
    </location>
</feature>
<feature type="site" description="Reversibly protonated during proton transport" evidence="2">
    <location>
        <position position="53"/>
    </location>
</feature>
<comment type="function">
    <text evidence="2">F(1)F(0) ATP synthase produces ATP from ADP in the presence of a proton or sodium gradient. F-type ATPases consist of two structural domains, F(1) containing the extramembraneous catalytic core and F(0) containing the membrane proton channel, linked together by a central stalk and a peripheral stalk. During catalysis, ATP synthesis in the catalytic domain of F(1) is coupled via a rotary mechanism of the central stalk subunits to proton translocation.</text>
</comment>
<comment type="function">
    <text evidence="2">Key component of the F(0) channel; it plays a direct role in translocation across the membrane. A homomeric c-ring of between 10-14 subunits forms the central stalk rotor element with the F(1) delta and epsilon subunits.</text>
</comment>
<comment type="subunit">
    <text evidence="2">F-type ATPases have 2 components, F(1) - the catalytic core - and F(0) - the membrane proton channel. F(1) has five subunits: alpha(3), beta(3), gamma(1), delta(1), epsilon(1). F(0) has three main subunits: a(1), b(2) and c(10-14). The alpha and beta chains form an alternating ring which encloses part of the gamma chain. F(1) is attached to F(0) by a central stalk formed by the gamma and epsilon chains, while a peripheral stalk is formed by the delta and b chains.</text>
</comment>
<comment type="subcellular location">
    <subcellularLocation>
        <location evidence="2">Cell membrane</location>
        <topology evidence="2">Multi-pass membrane protein</topology>
    </subcellularLocation>
</comment>
<comment type="miscellaneous">
    <text evidence="1">Dicyclohexylcarbodiimide (DCDD) binding to the active glutamate residue inhibits ATPase in vitro.</text>
</comment>
<comment type="similarity">
    <text evidence="2">Belongs to the ATPase C chain family.</text>
</comment>
<proteinExistence type="inferred from homology"/>
<reference key="1">
    <citation type="journal article" date="1996" name="Gene">
        <title>Cloning and nucleotide sequence analysis of the Streptococcus mutans membrane-bound, proton-translocating ATPase operon.</title>
        <authorList>
            <person name="Smith A.J."/>
            <person name="Quivey R.G."/>
            <person name="Faustoferri R.C."/>
        </authorList>
    </citation>
    <scope>NUCLEOTIDE SEQUENCE [GENOMIC DNA]</scope>
    <source>
        <strain>GS-5</strain>
    </source>
</reference>
<reference key="2">
    <citation type="journal article" date="2002" name="Proc. Natl. Acad. Sci. U.S.A.">
        <title>Genome sequence of Streptococcus mutans UA159, a cariogenic dental pathogen.</title>
        <authorList>
            <person name="Ajdic D.J."/>
            <person name="McShan W.M."/>
            <person name="McLaughlin R.E."/>
            <person name="Savic G."/>
            <person name="Chang J."/>
            <person name="Carson M.B."/>
            <person name="Primeaux C."/>
            <person name="Tian R."/>
            <person name="Kenton S."/>
            <person name="Jia H.G."/>
            <person name="Lin S.P."/>
            <person name="Qian Y."/>
            <person name="Li S."/>
            <person name="Zhu H."/>
            <person name="Najar F.Z."/>
            <person name="Lai H."/>
            <person name="White J."/>
            <person name="Roe B.A."/>
            <person name="Ferretti J.J."/>
        </authorList>
    </citation>
    <scope>NUCLEOTIDE SEQUENCE [LARGE SCALE GENOMIC DNA]</scope>
    <source>
        <strain>ATCC 700610 / UA159</strain>
    </source>
</reference>
<protein>
    <recommendedName>
        <fullName evidence="2">ATP synthase subunit c</fullName>
    </recommendedName>
    <alternativeName>
        <fullName evidence="2">ATP synthase F(0) sector subunit c</fullName>
    </alternativeName>
    <alternativeName>
        <fullName evidence="2">F-type ATPase subunit c</fullName>
        <shortName evidence="2">F-ATPase subunit c</shortName>
    </alternativeName>
    <alternativeName>
        <fullName evidence="2">Lipid-binding protein</fullName>
    </alternativeName>
</protein>
<keyword id="KW-0066">ATP synthesis</keyword>
<keyword id="KW-1003">Cell membrane</keyword>
<keyword id="KW-0138">CF(0)</keyword>
<keyword id="KW-0375">Hydrogen ion transport</keyword>
<keyword id="KW-0406">Ion transport</keyword>
<keyword id="KW-0446">Lipid-binding</keyword>
<keyword id="KW-0472">Membrane</keyword>
<keyword id="KW-1185">Reference proteome</keyword>
<keyword id="KW-0812">Transmembrane</keyword>
<keyword id="KW-1133">Transmembrane helix</keyword>
<keyword id="KW-0813">Transport</keyword>
<organism>
    <name type="scientific">Streptococcus mutans serotype c (strain ATCC 700610 / UA159)</name>
    <dbReference type="NCBI Taxonomy" id="210007"/>
    <lineage>
        <taxon>Bacteria</taxon>
        <taxon>Bacillati</taxon>
        <taxon>Bacillota</taxon>
        <taxon>Bacilli</taxon>
        <taxon>Lactobacillales</taxon>
        <taxon>Streptococcaceae</taxon>
        <taxon>Streptococcus</taxon>
    </lineage>
</organism>